<gene>
    <name evidence="1" type="primary">rplY</name>
    <name evidence="1" type="synonym">ctc</name>
    <name type="ordered locus">BB_0786</name>
</gene>
<proteinExistence type="evidence at protein level"/>
<name>RL25_BORBU</name>
<keyword id="KW-0002">3D-structure</keyword>
<keyword id="KW-1185">Reference proteome</keyword>
<keyword id="KW-0687">Ribonucleoprotein</keyword>
<keyword id="KW-0689">Ribosomal protein</keyword>
<keyword id="KW-0694">RNA-binding</keyword>
<keyword id="KW-0699">rRNA-binding</keyword>
<sequence length="182" mass="20450">MENSRVLSCQYRSSFGSSNARRIRAKSEIPAVVYGQGKDVSHLRIKSSEFNKKFAKFTDNTVLILDDGKLERCVFVKDAAENIASKLIYHIDFYEVDRNVELEKYVPIKLIGASIGVKEGGILTVLKEQVKVRSLPLDLPEFIELDLTPVNKGDSVLLKDLVLPSNVRLAENDENLEVVIIK</sequence>
<evidence type="ECO:0000255" key="1">
    <source>
        <dbReference type="HAMAP-Rule" id="MF_01334"/>
    </source>
</evidence>
<evidence type="ECO:0000305" key="2"/>
<evidence type="ECO:0007829" key="3">
    <source>
        <dbReference type="PDB" id="8FN2"/>
    </source>
</evidence>
<accession>O51727</accession>
<protein>
    <recommendedName>
        <fullName evidence="1">Large ribosomal subunit protein bL25</fullName>
    </recommendedName>
    <alternativeName>
        <fullName evidence="2">50S ribosomal protein L25</fullName>
    </alternativeName>
    <alternativeName>
        <fullName evidence="1">General stress protein CTC</fullName>
    </alternativeName>
</protein>
<dbReference type="EMBL" id="AE000783">
    <property type="protein sequence ID" value="AAC67123.2"/>
    <property type="molecule type" value="Genomic_DNA"/>
</dbReference>
<dbReference type="PIR" id="A70198">
    <property type="entry name" value="A70198"/>
</dbReference>
<dbReference type="RefSeq" id="NP_212920.2">
    <property type="nucleotide sequence ID" value="NC_001318.1"/>
</dbReference>
<dbReference type="RefSeq" id="WP_010889819.1">
    <property type="nucleotide sequence ID" value="NC_001318.1"/>
</dbReference>
<dbReference type="PDB" id="8FMW">
    <property type="method" value="EM"/>
    <property type="resolution" value="2.86 A"/>
    <property type="chains" value="AX=2-182"/>
</dbReference>
<dbReference type="PDB" id="8FN2">
    <property type="method" value="EM"/>
    <property type="resolution" value="3.40 A"/>
    <property type="chains" value="X=2-182"/>
</dbReference>
<dbReference type="PDBsum" id="8FMW"/>
<dbReference type="PDBsum" id="8FN2"/>
<dbReference type="EMDB" id="EMD-29298"/>
<dbReference type="EMDB" id="EMD-29304"/>
<dbReference type="SMR" id="O51727"/>
<dbReference type="STRING" id="224326.BB_0786"/>
<dbReference type="PaxDb" id="224326-BB_0786"/>
<dbReference type="EnsemblBacteria" id="AAC67123">
    <property type="protein sequence ID" value="AAC67123"/>
    <property type="gene ID" value="BB_0786"/>
</dbReference>
<dbReference type="KEGG" id="bbu:BB_0786"/>
<dbReference type="PATRIC" id="fig|224326.49.peg.1178"/>
<dbReference type="HOGENOM" id="CLU_075939_2_0_12"/>
<dbReference type="OrthoDB" id="9790002at2"/>
<dbReference type="Proteomes" id="UP000001807">
    <property type="component" value="Chromosome"/>
</dbReference>
<dbReference type="GO" id="GO:0022625">
    <property type="term" value="C:cytosolic large ribosomal subunit"/>
    <property type="evidence" value="ECO:0007669"/>
    <property type="project" value="TreeGrafter"/>
</dbReference>
<dbReference type="GO" id="GO:0008097">
    <property type="term" value="F:5S rRNA binding"/>
    <property type="evidence" value="ECO:0007669"/>
    <property type="project" value="InterPro"/>
</dbReference>
<dbReference type="GO" id="GO:0003735">
    <property type="term" value="F:structural constituent of ribosome"/>
    <property type="evidence" value="ECO:0007669"/>
    <property type="project" value="InterPro"/>
</dbReference>
<dbReference type="GO" id="GO:0006412">
    <property type="term" value="P:translation"/>
    <property type="evidence" value="ECO:0007669"/>
    <property type="project" value="UniProtKB-UniRule"/>
</dbReference>
<dbReference type="CDD" id="cd00495">
    <property type="entry name" value="Ribosomal_L25_TL5_CTC"/>
    <property type="match status" value="1"/>
</dbReference>
<dbReference type="Gene3D" id="2.170.120.20">
    <property type="entry name" value="Ribosomal protein L25, beta domain"/>
    <property type="match status" value="1"/>
</dbReference>
<dbReference type="Gene3D" id="2.40.240.10">
    <property type="entry name" value="Ribosomal Protein L25, Chain P"/>
    <property type="match status" value="1"/>
</dbReference>
<dbReference type="HAMAP" id="MF_01334">
    <property type="entry name" value="Ribosomal_bL25_CTC"/>
    <property type="match status" value="1"/>
</dbReference>
<dbReference type="InterPro" id="IPR020056">
    <property type="entry name" value="Rbsml_bL25/Gln-tRNA_synth_N"/>
</dbReference>
<dbReference type="InterPro" id="IPR011035">
    <property type="entry name" value="Ribosomal_bL25/Gln-tRNA_synth"/>
</dbReference>
<dbReference type="InterPro" id="IPR020057">
    <property type="entry name" value="Ribosomal_bL25_b-dom"/>
</dbReference>
<dbReference type="InterPro" id="IPR037121">
    <property type="entry name" value="Ribosomal_bL25_C"/>
</dbReference>
<dbReference type="InterPro" id="IPR001021">
    <property type="entry name" value="Ribosomal_bL25_long"/>
</dbReference>
<dbReference type="InterPro" id="IPR029751">
    <property type="entry name" value="Ribosomal_L25_dom"/>
</dbReference>
<dbReference type="InterPro" id="IPR020930">
    <property type="entry name" value="Ribosomal_uL5_bac-type"/>
</dbReference>
<dbReference type="NCBIfam" id="TIGR00731">
    <property type="entry name" value="bL25_bact_ctc"/>
    <property type="match status" value="1"/>
</dbReference>
<dbReference type="NCBIfam" id="NF004135">
    <property type="entry name" value="PRK05618.3-1"/>
    <property type="match status" value="1"/>
</dbReference>
<dbReference type="PANTHER" id="PTHR33284">
    <property type="entry name" value="RIBOSOMAL PROTEIN L25/GLN-TRNA SYNTHETASE, ANTI-CODON-BINDING DOMAIN-CONTAINING PROTEIN"/>
    <property type="match status" value="1"/>
</dbReference>
<dbReference type="PANTHER" id="PTHR33284:SF1">
    <property type="entry name" value="RIBOSOMAL PROTEIN L25_GLN-TRNA SYNTHETASE, ANTI-CODON-BINDING DOMAIN-CONTAINING PROTEIN"/>
    <property type="match status" value="1"/>
</dbReference>
<dbReference type="Pfam" id="PF01386">
    <property type="entry name" value="Ribosomal_L25p"/>
    <property type="match status" value="1"/>
</dbReference>
<dbReference type="Pfam" id="PF14693">
    <property type="entry name" value="Ribosomal_TL5_C"/>
    <property type="match status" value="1"/>
</dbReference>
<dbReference type="SUPFAM" id="SSF50715">
    <property type="entry name" value="Ribosomal protein L25-like"/>
    <property type="match status" value="1"/>
</dbReference>
<comment type="function">
    <text evidence="1">This is one of the proteins that binds to the 5S RNA in the ribosome where it forms part of the central protuberance.</text>
</comment>
<comment type="subunit">
    <text evidence="1">Part of the 50S ribosomal subunit; part of the 5S rRNA/L5/L18/L25 subcomplex. Contacts the 5S rRNA. Binds to the 5S rRNA independently of L5 and L18.</text>
</comment>
<comment type="similarity">
    <text evidence="1">Belongs to the bacterial ribosomal protein bL25 family. CTC subfamily.</text>
</comment>
<reference key="1">
    <citation type="journal article" date="1997" name="Nature">
        <title>Genomic sequence of a Lyme disease spirochaete, Borrelia burgdorferi.</title>
        <authorList>
            <person name="Fraser C.M."/>
            <person name="Casjens S."/>
            <person name="Huang W.M."/>
            <person name="Sutton G.G."/>
            <person name="Clayton R.A."/>
            <person name="Lathigra R."/>
            <person name="White O."/>
            <person name="Ketchum K.A."/>
            <person name="Dodson R.J."/>
            <person name="Hickey E.K."/>
            <person name="Gwinn M.L."/>
            <person name="Dougherty B.A."/>
            <person name="Tomb J.-F."/>
            <person name="Fleischmann R.D."/>
            <person name="Richardson D.L."/>
            <person name="Peterson J.D."/>
            <person name="Kerlavage A.R."/>
            <person name="Quackenbush J."/>
            <person name="Salzberg S.L."/>
            <person name="Hanson M."/>
            <person name="van Vugt R."/>
            <person name="Palmer N."/>
            <person name="Adams M.D."/>
            <person name="Gocayne J.D."/>
            <person name="Weidman J.F."/>
            <person name="Utterback T.R."/>
            <person name="Watthey L."/>
            <person name="McDonald L.A."/>
            <person name="Artiach P."/>
            <person name="Bowman C."/>
            <person name="Garland S.A."/>
            <person name="Fujii C."/>
            <person name="Cotton M.D."/>
            <person name="Horst K."/>
            <person name="Roberts K.M."/>
            <person name="Hatch B."/>
            <person name="Smith H.O."/>
            <person name="Venter J.C."/>
        </authorList>
    </citation>
    <scope>NUCLEOTIDE SEQUENCE [LARGE SCALE GENOMIC DNA]</scope>
    <source>
        <strain>ATCC 35210 / DSM 4680 / CIP 102532 / B31</strain>
    </source>
</reference>
<feature type="chain" id="PRO_0000181519" description="Large ribosomal subunit protein bL25">
    <location>
        <begin position="1"/>
        <end position="182"/>
    </location>
</feature>
<feature type="helix" evidence="3">
    <location>
        <begin position="3"/>
        <end position="5"/>
    </location>
</feature>
<feature type="strand" evidence="3">
    <location>
        <begin position="6"/>
        <end position="11"/>
    </location>
</feature>
<feature type="helix" evidence="3">
    <location>
        <begin position="17"/>
        <end position="25"/>
    </location>
</feature>
<feature type="strand" evidence="3">
    <location>
        <begin position="28"/>
        <end position="34"/>
    </location>
</feature>
<feature type="strand" evidence="3">
    <location>
        <begin position="41"/>
        <end position="46"/>
    </location>
</feature>
<feature type="helix" evidence="3">
    <location>
        <begin position="47"/>
        <end position="54"/>
    </location>
</feature>
<feature type="strand" evidence="3">
    <location>
        <begin position="62"/>
        <end position="66"/>
    </location>
</feature>
<feature type="strand" evidence="3">
    <location>
        <begin position="71"/>
        <end position="82"/>
    </location>
</feature>
<feature type="turn" evidence="3">
    <location>
        <begin position="83"/>
        <end position="86"/>
    </location>
</feature>
<feature type="strand" evidence="3">
    <location>
        <begin position="87"/>
        <end position="95"/>
    </location>
</feature>
<feature type="strand" evidence="3">
    <location>
        <begin position="102"/>
        <end position="112"/>
    </location>
</feature>
<feature type="helix" evidence="3">
    <location>
        <begin position="115"/>
        <end position="118"/>
    </location>
</feature>
<feature type="strand" evidence="3">
    <location>
        <begin position="128"/>
        <end position="134"/>
    </location>
</feature>
<feature type="helix" evidence="3">
    <location>
        <begin position="136"/>
        <end position="138"/>
    </location>
</feature>
<feature type="strand" evidence="3">
    <location>
        <begin position="141"/>
        <end position="146"/>
    </location>
</feature>
<feature type="strand" evidence="3">
    <location>
        <begin position="154"/>
        <end position="158"/>
    </location>
</feature>
<feature type="strand" evidence="3">
    <location>
        <begin position="177"/>
        <end position="181"/>
    </location>
</feature>
<organism>
    <name type="scientific">Borreliella burgdorferi (strain ATCC 35210 / DSM 4680 / CIP 102532 / B31)</name>
    <name type="common">Borrelia burgdorferi</name>
    <dbReference type="NCBI Taxonomy" id="224326"/>
    <lineage>
        <taxon>Bacteria</taxon>
        <taxon>Pseudomonadati</taxon>
        <taxon>Spirochaetota</taxon>
        <taxon>Spirochaetia</taxon>
        <taxon>Spirochaetales</taxon>
        <taxon>Borreliaceae</taxon>
        <taxon>Borreliella</taxon>
    </lineage>
</organism>